<reference key="1">
    <citation type="submission" date="2008-05" db="EMBL/GenBank/DDBJ databases">
        <title>Genome sequence of Helicobacter pylori from the remote Amazon: traces of Asian ancestry of the first Americans.</title>
        <authorList>
            <person name="Kersulyte D."/>
            <person name="Kalia A."/>
            <person name="Gilman R.H."/>
            <person name="Berg D.E."/>
        </authorList>
    </citation>
    <scope>NUCLEOTIDE SEQUENCE [LARGE SCALE GENOMIC DNA]</scope>
    <source>
        <strain>Shi470</strain>
    </source>
</reference>
<dbReference type="EC" id="2.1.3.-" evidence="1"/>
<dbReference type="EMBL" id="CP001072">
    <property type="protein sequence ID" value="ACD48504.1"/>
    <property type="molecule type" value="Genomic_DNA"/>
</dbReference>
<dbReference type="RefSeq" id="WP_000655595.1">
    <property type="nucleotide sequence ID" value="NC_010698.2"/>
</dbReference>
<dbReference type="SMR" id="B2UUH2"/>
<dbReference type="KEGG" id="hps:HPSH_05465"/>
<dbReference type="HOGENOM" id="CLU_078475_0_0_7"/>
<dbReference type="GO" id="GO:0016743">
    <property type="term" value="F:carboxyl- or carbamoyltransferase activity"/>
    <property type="evidence" value="ECO:0007669"/>
    <property type="project" value="UniProtKB-UniRule"/>
</dbReference>
<dbReference type="GO" id="GO:1904047">
    <property type="term" value="F:S-adenosyl-L-methionine binding"/>
    <property type="evidence" value="ECO:0007669"/>
    <property type="project" value="UniProtKB-UniRule"/>
</dbReference>
<dbReference type="GO" id="GO:0002098">
    <property type="term" value="P:tRNA wobble uridine modification"/>
    <property type="evidence" value="ECO:0007669"/>
    <property type="project" value="InterPro"/>
</dbReference>
<dbReference type="CDD" id="cd02440">
    <property type="entry name" value="AdoMet_MTases"/>
    <property type="match status" value="1"/>
</dbReference>
<dbReference type="FunFam" id="3.40.50.150:FF:000474">
    <property type="entry name" value="Carboxy-S-adenosyl-L-methionine synthase"/>
    <property type="match status" value="1"/>
</dbReference>
<dbReference type="Gene3D" id="3.40.50.150">
    <property type="entry name" value="Vaccinia Virus protein VP39"/>
    <property type="match status" value="1"/>
</dbReference>
<dbReference type="HAMAP" id="MF_01589">
    <property type="entry name" value="Cx_SAM_synthase"/>
    <property type="match status" value="1"/>
</dbReference>
<dbReference type="InterPro" id="IPR005271">
    <property type="entry name" value="CmoA"/>
</dbReference>
<dbReference type="InterPro" id="IPR041698">
    <property type="entry name" value="Methyltransf_25"/>
</dbReference>
<dbReference type="InterPro" id="IPR029063">
    <property type="entry name" value="SAM-dependent_MTases_sf"/>
</dbReference>
<dbReference type="NCBIfam" id="TIGR00740">
    <property type="entry name" value="carboxy-S-adenosyl-L-methionine synthase CmoA"/>
    <property type="match status" value="1"/>
</dbReference>
<dbReference type="PANTHER" id="PTHR43861:SF2">
    <property type="entry name" value="CARBOXY-S-ADENOSYL-L-METHIONINE SYNTHASE"/>
    <property type="match status" value="1"/>
</dbReference>
<dbReference type="PANTHER" id="PTHR43861">
    <property type="entry name" value="TRANS-ACONITATE 2-METHYLTRANSFERASE-RELATED"/>
    <property type="match status" value="1"/>
</dbReference>
<dbReference type="Pfam" id="PF13649">
    <property type="entry name" value="Methyltransf_25"/>
    <property type="match status" value="1"/>
</dbReference>
<dbReference type="PIRSF" id="PIRSF006325">
    <property type="entry name" value="MeTrfase_bac"/>
    <property type="match status" value="1"/>
</dbReference>
<dbReference type="SUPFAM" id="SSF53335">
    <property type="entry name" value="S-adenosyl-L-methionine-dependent methyltransferases"/>
    <property type="match status" value="1"/>
</dbReference>
<organism>
    <name type="scientific">Helicobacter pylori (strain Shi470)</name>
    <dbReference type="NCBI Taxonomy" id="512562"/>
    <lineage>
        <taxon>Bacteria</taxon>
        <taxon>Pseudomonadati</taxon>
        <taxon>Campylobacterota</taxon>
        <taxon>Epsilonproteobacteria</taxon>
        <taxon>Campylobacterales</taxon>
        <taxon>Helicobacteraceae</taxon>
        <taxon>Helicobacter</taxon>
    </lineage>
</organism>
<keyword id="KW-0949">S-adenosyl-L-methionine</keyword>
<keyword id="KW-0808">Transferase</keyword>
<protein>
    <recommendedName>
        <fullName evidence="1">Carboxy-S-adenosyl-L-methionine synthase</fullName>
        <shortName evidence="1">Cx-SAM synthase</shortName>
        <ecNumber evidence="1">2.1.3.-</ecNumber>
    </recommendedName>
</protein>
<evidence type="ECO:0000255" key="1">
    <source>
        <dbReference type="HAMAP-Rule" id="MF_01589"/>
    </source>
</evidence>
<feature type="chain" id="PRO_1000201357" description="Carboxy-S-adenosyl-L-methionine synthase">
    <location>
        <begin position="1"/>
        <end position="239"/>
    </location>
</feature>
<feature type="binding site" evidence="1">
    <location>
        <position position="35"/>
    </location>
    <ligand>
        <name>S-adenosyl-L-methionine</name>
        <dbReference type="ChEBI" id="CHEBI:59789"/>
    </ligand>
</feature>
<feature type="binding site" evidence="1">
    <location>
        <begin position="64"/>
        <end position="66"/>
    </location>
    <ligand>
        <name>S-adenosyl-L-methionine</name>
        <dbReference type="ChEBI" id="CHEBI:59789"/>
    </ligand>
</feature>
<feature type="binding site" evidence="1">
    <location>
        <begin position="88"/>
        <end position="89"/>
    </location>
    <ligand>
        <name>S-adenosyl-L-methionine</name>
        <dbReference type="ChEBI" id="CHEBI:59789"/>
    </ligand>
</feature>
<feature type="binding site" evidence="1">
    <location>
        <position position="195"/>
    </location>
    <ligand>
        <name>S-adenosyl-L-methionine</name>
        <dbReference type="ChEBI" id="CHEBI:59789"/>
    </ligand>
</feature>
<comment type="function">
    <text evidence="1">Catalyzes the conversion of S-adenosyl-L-methionine (SAM) to carboxy-S-adenosyl-L-methionine (Cx-SAM).</text>
</comment>
<comment type="catalytic activity">
    <reaction evidence="1">
        <text>prephenate + S-adenosyl-L-methionine = carboxy-S-adenosyl-L-methionine + 3-phenylpyruvate + H2O</text>
        <dbReference type="Rhea" id="RHEA:51692"/>
        <dbReference type="ChEBI" id="CHEBI:15377"/>
        <dbReference type="ChEBI" id="CHEBI:18005"/>
        <dbReference type="ChEBI" id="CHEBI:29934"/>
        <dbReference type="ChEBI" id="CHEBI:59789"/>
        <dbReference type="ChEBI" id="CHEBI:134278"/>
    </reaction>
</comment>
<comment type="subunit">
    <text evidence="1">Homodimer.</text>
</comment>
<comment type="similarity">
    <text evidence="1">Belongs to the class I-like SAM-binding methyltransferase superfamily. Cx-SAM synthase family.</text>
</comment>
<sequence length="239" mass="27966">MKDTLFNQSLNKRFCFDEKVAHVFDDMLERSIPYYHEMLDLGAYFIAQNLKENINPKPLIYDLGCSTGNFFIALNQQIQQDIELVGIDNSMPMLKKAQEKLKDFNNARFECMDFLEVEFKEASAFSLLFVLQFVRPMQREVLLKKIYNSLALNGVLLVGEKIMSEDRILDKQMIELYYLYKQNQGYSHNEIAFKREALENVLVPYSLKENVALLESVGFKHVEALFKWVNFTLLVARKT</sequence>
<gene>
    <name evidence="1" type="primary">cmoA</name>
    <name type="ordered locus">HPSH_05465</name>
</gene>
<proteinExistence type="inferred from homology"/>
<name>CMOA_HELPS</name>
<accession>B2UUH2</accession>